<geneLocation type="mitochondrion"/>
<reference key="1">
    <citation type="journal article" date="1992" name="Proc. R. Soc. B">
        <title>Phylogenetic relationships of the thylacine (Mammalia: Thylacinidae) among dasyuroid marsupials: evidence from cytochrome b DNA sequences.</title>
        <authorList>
            <person name="Krajewski C."/>
            <person name="Driskell A.C."/>
            <person name="Baverstock P.R."/>
            <person name="Braun M.J."/>
        </authorList>
    </citation>
    <scope>NUCLEOTIDE SEQUENCE [GENOMIC DNA]</scope>
</reference>
<name>CYB_PHATA</name>
<protein>
    <recommendedName>
        <fullName>Cytochrome b</fullName>
    </recommendedName>
    <alternativeName>
        <fullName>Complex III subunit 3</fullName>
    </alternativeName>
    <alternativeName>
        <fullName>Complex III subunit III</fullName>
    </alternativeName>
    <alternativeName>
        <fullName>Cytochrome b-c1 complex subunit 3</fullName>
    </alternativeName>
    <alternativeName>
        <fullName>Ubiquinol-cytochrome-c reductase complex cytochrome b subunit</fullName>
    </alternativeName>
</protein>
<comment type="function">
    <text evidence="2">Component of the ubiquinol-cytochrome c reductase complex (complex III or cytochrome b-c1 complex) that is part of the mitochondrial respiratory chain. The b-c1 complex mediates electron transfer from ubiquinol to cytochrome c. Contributes to the generation of a proton gradient across the mitochondrial membrane that is then used for ATP synthesis.</text>
</comment>
<comment type="cofactor">
    <cofactor evidence="2">
        <name>heme b</name>
        <dbReference type="ChEBI" id="CHEBI:60344"/>
    </cofactor>
    <text evidence="2">Binds 2 heme b groups non-covalently.</text>
</comment>
<comment type="subunit">
    <text evidence="2">The cytochrome bc1 complex contains 11 subunits: 3 respiratory subunits (MT-CYB, CYC1 and UQCRFS1), 2 core proteins (UQCRC1 and UQCRC2) and 6 low-molecular weight proteins (UQCRH/QCR6, UQCRB/QCR7, UQCRQ/QCR8, UQCR10/QCR9, UQCR11/QCR10 and a cleavage product of UQCRFS1). This cytochrome bc1 complex then forms a dimer.</text>
</comment>
<comment type="subcellular location">
    <subcellularLocation>
        <location evidence="2">Mitochondrion inner membrane</location>
        <topology evidence="2">Multi-pass membrane protein</topology>
    </subcellularLocation>
</comment>
<comment type="miscellaneous">
    <text evidence="1">Heme 1 (or BL or b562) is low-potential and absorbs at about 562 nm, and heme 2 (or BH or b566) is high-potential and absorbs at about 566 nm.</text>
</comment>
<comment type="similarity">
    <text evidence="3 4">Belongs to the cytochrome b family.</text>
</comment>
<comment type="caution">
    <text evidence="2">The full-length protein contains only eight transmembrane helices, not nine as predicted by bioinformatics tools.</text>
</comment>
<dbReference type="EMBL" id="M99459">
    <property type="protein sequence ID" value="AAB40404.1"/>
    <property type="molecule type" value="Genomic_DNA"/>
</dbReference>
<dbReference type="SMR" id="Q35673"/>
<dbReference type="GO" id="GO:0005743">
    <property type="term" value="C:mitochondrial inner membrane"/>
    <property type="evidence" value="ECO:0007669"/>
    <property type="project" value="UniProtKB-SubCell"/>
</dbReference>
<dbReference type="GO" id="GO:0045275">
    <property type="term" value="C:respiratory chain complex III"/>
    <property type="evidence" value="ECO:0007669"/>
    <property type="project" value="InterPro"/>
</dbReference>
<dbReference type="GO" id="GO:0046872">
    <property type="term" value="F:metal ion binding"/>
    <property type="evidence" value="ECO:0007669"/>
    <property type="project" value="UniProtKB-KW"/>
</dbReference>
<dbReference type="GO" id="GO:0008121">
    <property type="term" value="F:ubiquinol-cytochrome-c reductase activity"/>
    <property type="evidence" value="ECO:0007669"/>
    <property type="project" value="InterPro"/>
</dbReference>
<dbReference type="GO" id="GO:0006122">
    <property type="term" value="P:mitochondrial electron transport, ubiquinol to cytochrome c"/>
    <property type="evidence" value="ECO:0007669"/>
    <property type="project" value="TreeGrafter"/>
</dbReference>
<dbReference type="CDD" id="cd00290">
    <property type="entry name" value="cytochrome_b_C"/>
    <property type="match status" value="1"/>
</dbReference>
<dbReference type="CDD" id="cd00284">
    <property type="entry name" value="Cytochrome_b_N"/>
    <property type="match status" value="1"/>
</dbReference>
<dbReference type="FunFam" id="1.20.810.10:FF:000002">
    <property type="entry name" value="Cytochrome b"/>
    <property type="match status" value="1"/>
</dbReference>
<dbReference type="Gene3D" id="1.20.810.10">
    <property type="entry name" value="Cytochrome Bc1 Complex, Chain C"/>
    <property type="match status" value="1"/>
</dbReference>
<dbReference type="InterPro" id="IPR005798">
    <property type="entry name" value="Cyt_b/b6_C"/>
</dbReference>
<dbReference type="InterPro" id="IPR036150">
    <property type="entry name" value="Cyt_b/b6_C_sf"/>
</dbReference>
<dbReference type="InterPro" id="IPR005797">
    <property type="entry name" value="Cyt_b/b6_N"/>
</dbReference>
<dbReference type="InterPro" id="IPR027387">
    <property type="entry name" value="Cytb/b6-like_sf"/>
</dbReference>
<dbReference type="InterPro" id="IPR030689">
    <property type="entry name" value="Cytochrome_b"/>
</dbReference>
<dbReference type="InterPro" id="IPR048260">
    <property type="entry name" value="Cytochrome_b_C_euk/bac"/>
</dbReference>
<dbReference type="InterPro" id="IPR048259">
    <property type="entry name" value="Cytochrome_b_N_euk/bac"/>
</dbReference>
<dbReference type="InterPro" id="IPR016174">
    <property type="entry name" value="Di-haem_cyt_TM"/>
</dbReference>
<dbReference type="PANTHER" id="PTHR19271">
    <property type="entry name" value="CYTOCHROME B"/>
    <property type="match status" value="1"/>
</dbReference>
<dbReference type="PANTHER" id="PTHR19271:SF16">
    <property type="entry name" value="CYTOCHROME B"/>
    <property type="match status" value="1"/>
</dbReference>
<dbReference type="Pfam" id="PF00032">
    <property type="entry name" value="Cytochrom_B_C"/>
    <property type="match status" value="1"/>
</dbReference>
<dbReference type="Pfam" id="PF00033">
    <property type="entry name" value="Cytochrome_B"/>
    <property type="match status" value="1"/>
</dbReference>
<dbReference type="PIRSF" id="PIRSF038885">
    <property type="entry name" value="COB"/>
    <property type="match status" value="1"/>
</dbReference>
<dbReference type="SUPFAM" id="SSF81648">
    <property type="entry name" value="a domain/subunit of cytochrome bc1 complex (Ubiquinol-cytochrome c reductase)"/>
    <property type="match status" value="1"/>
</dbReference>
<dbReference type="SUPFAM" id="SSF81342">
    <property type="entry name" value="Transmembrane di-heme cytochromes"/>
    <property type="match status" value="1"/>
</dbReference>
<dbReference type="PROSITE" id="PS51003">
    <property type="entry name" value="CYTB_CTER"/>
    <property type="match status" value="1"/>
</dbReference>
<dbReference type="PROSITE" id="PS51002">
    <property type="entry name" value="CYTB_NTER"/>
    <property type="match status" value="1"/>
</dbReference>
<keyword id="KW-0249">Electron transport</keyword>
<keyword id="KW-0349">Heme</keyword>
<keyword id="KW-0408">Iron</keyword>
<keyword id="KW-0472">Membrane</keyword>
<keyword id="KW-0479">Metal-binding</keyword>
<keyword id="KW-0496">Mitochondrion</keyword>
<keyword id="KW-0999">Mitochondrion inner membrane</keyword>
<keyword id="KW-0679">Respiratory chain</keyword>
<keyword id="KW-0812">Transmembrane</keyword>
<keyword id="KW-1133">Transmembrane helix</keyword>
<keyword id="KW-0813">Transport</keyword>
<keyword id="KW-0830">Ubiquinone</keyword>
<proteinExistence type="inferred from homology"/>
<evidence type="ECO:0000250" key="1"/>
<evidence type="ECO:0000250" key="2">
    <source>
        <dbReference type="UniProtKB" id="P00157"/>
    </source>
</evidence>
<evidence type="ECO:0000255" key="3">
    <source>
        <dbReference type="PROSITE-ProRule" id="PRU00967"/>
    </source>
</evidence>
<evidence type="ECO:0000255" key="4">
    <source>
        <dbReference type="PROSITE-ProRule" id="PRU00968"/>
    </source>
</evidence>
<accession>Q35673</accession>
<feature type="chain" id="PRO_0000061385" description="Cytochrome b">
    <location>
        <begin position="1"/>
        <end position="381"/>
    </location>
</feature>
<feature type="transmembrane region" description="Helical" evidence="2">
    <location>
        <begin position="33"/>
        <end position="53"/>
    </location>
</feature>
<feature type="transmembrane region" description="Helical" evidence="2">
    <location>
        <begin position="77"/>
        <end position="98"/>
    </location>
</feature>
<feature type="transmembrane region" description="Helical" evidence="2">
    <location>
        <begin position="113"/>
        <end position="133"/>
    </location>
</feature>
<feature type="transmembrane region" description="Helical" evidence="2">
    <location>
        <begin position="178"/>
        <end position="198"/>
    </location>
</feature>
<feature type="transmembrane region" description="Helical" evidence="2">
    <location>
        <begin position="226"/>
        <end position="246"/>
    </location>
</feature>
<feature type="transmembrane region" description="Helical" evidence="2">
    <location>
        <begin position="288"/>
        <end position="308"/>
    </location>
</feature>
<feature type="transmembrane region" description="Helical" evidence="2">
    <location>
        <begin position="320"/>
        <end position="340"/>
    </location>
</feature>
<feature type="transmembrane region" description="Helical" evidence="2">
    <location>
        <begin position="347"/>
        <end position="367"/>
    </location>
</feature>
<feature type="binding site" description="axial binding residue" evidence="2">
    <location>
        <position position="83"/>
    </location>
    <ligand>
        <name>heme b</name>
        <dbReference type="ChEBI" id="CHEBI:60344"/>
        <label>b562</label>
    </ligand>
    <ligandPart>
        <name>Fe</name>
        <dbReference type="ChEBI" id="CHEBI:18248"/>
    </ligandPart>
</feature>
<feature type="binding site" description="axial binding residue" evidence="2">
    <location>
        <position position="97"/>
    </location>
    <ligand>
        <name>heme b</name>
        <dbReference type="ChEBI" id="CHEBI:60344"/>
        <label>b566</label>
    </ligand>
    <ligandPart>
        <name>Fe</name>
        <dbReference type="ChEBI" id="CHEBI:18248"/>
    </ligandPart>
</feature>
<feature type="binding site" description="axial binding residue" evidence="2">
    <location>
        <position position="182"/>
    </location>
    <ligand>
        <name>heme b</name>
        <dbReference type="ChEBI" id="CHEBI:60344"/>
        <label>b562</label>
    </ligand>
    <ligandPart>
        <name>Fe</name>
        <dbReference type="ChEBI" id="CHEBI:18248"/>
    </ligandPart>
</feature>
<feature type="binding site" description="axial binding residue" evidence="2">
    <location>
        <position position="196"/>
    </location>
    <ligand>
        <name>heme b</name>
        <dbReference type="ChEBI" id="CHEBI:60344"/>
        <label>b566</label>
    </ligand>
    <ligandPart>
        <name>Fe</name>
        <dbReference type="ChEBI" id="CHEBI:18248"/>
    </ligandPart>
</feature>
<feature type="binding site" evidence="2">
    <location>
        <position position="201"/>
    </location>
    <ligand>
        <name>a ubiquinone</name>
        <dbReference type="ChEBI" id="CHEBI:16389"/>
    </ligand>
</feature>
<gene>
    <name type="primary">MT-CYB</name>
    <name type="synonym">COB</name>
    <name type="synonym">CYTB</name>
    <name type="synonym">MTCYB</name>
</gene>
<sequence>MINLRKTHPLMKIINHSFIDLPAPSNISAWWNFGSLLGICLMIQILTGFFLAMHYTSDTLTAFTSVAHICRDVNYGWLLRNLHANGASMFFMCLFLHVGLGIYYGSYLYKETWNIGVILLLTVMATAFVGYVLPWGQMSFWGATVITNLLSAIPYIGTTLAEWIWGGFAVDKATLTRFFAFHFILPFIIVALAIVHLLFLHETGSNNPSGINPDSDKIPFHPYYTIKDALGAVLLLLVLLLLALFSPDSLGDPDNFSPANPLNTPPHIKPEWYFLFAYAILRSIPNKLGGVLALLASILILLIIPLLHTANQRSMMFRPVSQTLFWILTADLITLTWIGGQPVEQPFIIIGQLASMLYFLLILVLMPLAGMFENYMLKPKW</sequence>
<organism>
    <name type="scientific">Phascogale tapoatafa</name>
    <name type="common">Common wambenger</name>
    <dbReference type="NCBI Taxonomy" id="9293"/>
    <lineage>
        <taxon>Eukaryota</taxon>
        <taxon>Metazoa</taxon>
        <taxon>Chordata</taxon>
        <taxon>Craniata</taxon>
        <taxon>Vertebrata</taxon>
        <taxon>Euteleostomi</taxon>
        <taxon>Mammalia</taxon>
        <taxon>Metatheria</taxon>
        <taxon>Dasyuromorphia</taxon>
        <taxon>Dasyuridae</taxon>
        <taxon>Phascogale</taxon>
    </lineage>
</organism>